<dbReference type="EC" id="6.1.1.10" evidence="1"/>
<dbReference type="EMBL" id="CP000647">
    <property type="protein sequence ID" value="ABR77978.1"/>
    <property type="molecule type" value="Genomic_DNA"/>
</dbReference>
<dbReference type="RefSeq" id="WP_002912753.1">
    <property type="nucleotide sequence ID" value="NC_009648.1"/>
</dbReference>
<dbReference type="SMR" id="A6TBK7"/>
<dbReference type="STRING" id="272620.KPN_02560"/>
<dbReference type="jPOST" id="A6TBK7"/>
<dbReference type="PaxDb" id="272620-KPN_02560"/>
<dbReference type="EnsemblBacteria" id="ABR77978">
    <property type="protein sequence ID" value="ABR77978"/>
    <property type="gene ID" value="KPN_02560"/>
</dbReference>
<dbReference type="GeneID" id="93272211"/>
<dbReference type="KEGG" id="kpn:KPN_02560"/>
<dbReference type="HOGENOM" id="CLU_009710_7_0_6"/>
<dbReference type="Proteomes" id="UP000000265">
    <property type="component" value="Chromosome"/>
</dbReference>
<dbReference type="GO" id="GO:0005829">
    <property type="term" value="C:cytosol"/>
    <property type="evidence" value="ECO:0007669"/>
    <property type="project" value="TreeGrafter"/>
</dbReference>
<dbReference type="GO" id="GO:0005524">
    <property type="term" value="F:ATP binding"/>
    <property type="evidence" value="ECO:0007669"/>
    <property type="project" value="UniProtKB-UniRule"/>
</dbReference>
<dbReference type="GO" id="GO:0046872">
    <property type="term" value="F:metal ion binding"/>
    <property type="evidence" value="ECO:0007669"/>
    <property type="project" value="UniProtKB-KW"/>
</dbReference>
<dbReference type="GO" id="GO:0004825">
    <property type="term" value="F:methionine-tRNA ligase activity"/>
    <property type="evidence" value="ECO:0007669"/>
    <property type="project" value="UniProtKB-UniRule"/>
</dbReference>
<dbReference type="GO" id="GO:0000049">
    <property type="term" value="F:tRNA binding"/>
    <property type="evidence" value="ECO:0007669"/>
    <property type="project" value="UniProtKB-KW"/>
</dbReference>
<dbReference type="GO" id="GO:0006431">
    <property type="term" value="P:methionyl-tRNA aminoacylation"/>
    <property type="evidence" value="ECO:0007669"/>
    <property type="project" value="UniProtKB-UniRule"/>
</dbReference>
<dbReference type="CDD" id="cd07957">
    <property type="entry name" value="Anticodon_Ia_Met"/>
    <property type="match status" value="1"/>
</dbReference>
<dbReference type="CDD" id="cd00814">
    <property type="entry name" value="MetRS_core"/>
    <property type="match status" value="1"/>
</dbReference>
<dbReference type="CDD" id="cd02800">
    <property type="entry name" value="tRNA_bind_EcMetRS_like"/>
    <property type="match status" value="1"/>
</dbReference>
<dbReference type="FunFam" id="1.10.730.10:FF:000005">
    <property type="entry name" value="Methionine--tRNA ligase"/>
    <property type="match status" value="1"/>
</dbReference>
<dbReference type="FunFam" id="2.20.28.20:FF:000001">
    <property type="entry name" value="Methionine--tRNA ligase"/>
    <property type="match status" value="1"/>
</dbReference>
<dbReference type="FunFam" id="2.40.50.140:FF:000042">
    <property type="entry name" value="Methionine--tRNA ligase"/>
    <property type="match status" value="1"/>
</dbReference>
<dbReference type="Gene3D" id="3.40.50.620">
    <property type="entry name" value="HUPs"/>
    <property type="match status" value="1"/>
</dbReference>
<dbReference type="Gene3D" id="1.10.730.10">
    <property type="entry name" value="Isoleucyl-tRNA Synthetase, Domain 1"/>
    <property type="match status" value="1"/>
</dbReference>
<dbReference type="Gene3D" id="2.20.28.20">
    <property type="entry name" value="Methionyl-tRNA synthetase, Zn-domain"/>
    <property type="match status" value="1"/>
</dbReference>
<dbReference type="Gene3D" id="2.40.50.140">
    <property type="entry name" value="Nucleic acid-binding proteins"/>
    <property type="match status" value="1"/>
</dbReference>
<dbReference type="HAMAP" id="MF_00098">
    <property type="entry name" value="Met_tRNA_synth_type1"/>
    <property type="match status" value="1"/>
</dbReference>
<dbReference type="InterPro" id="IPR001412">
    <property type="entry name" value="aa-tRNA-synth_I_CS"/>
</dbReference>
<dbReference type="InterPro" id="IPR041872">
    <property type="entry name" value="Anticodon_Met"/>
</dbReference>
<dbReference type="InterPro" id="IPR004495">
    <property type="entry name" value="Met-tRNA-synth_bsu_C"/>
</dbReference>
<dbReference type="InterPro" id="IPR023458">
    <property type="entry name" value="Met-tRNA_ligase_1"/>
</dbReference>
<dbReference type="InterPro" id="IPR014758">
    <property type="entry name" value="Met-tRNA_synth"/>
</dbReference>
<dbReference type="InterPro" id="IPR015413">
    <property type="entry name" value="Methionyl/Leucyl_tRNA_Synth"/>
</dbReference>
<dbReference type="InterPro" id="IPR033911">
    <property type="entry name" value="MetRS_core"/>
</dbReference>
<dbReference type="InterPro" id="IPR029038">
    <property type="entry name" value="MetRS_Zn"/>
</dbReference>
<dbReference type="InterPro" id="IPR012340">
    <property type="entry name" value="NA-bd_OB-fold"/>
</dbReference>
<dbReference type="InterPro" id="IPR014729">
    <property type="entry name" value="Rossmann-like_a/b/a_fold"/>
</dbReference>
<dbReference type="InterPro" id="IPR002547">
    <property type="entry name" value="tRNA-bd_dom"/>
</dbReference>
<dbReference type="InterPro" id="IPR009080">
    <property type="entry name" value="tRNAsynth_Ia_anticodon-bd"/>
</dbReference>
<dbReference type="NCBIfam" id="TIGR00398">
    <property type="entry name" value="metG"/>
    <property type="match status" value="1"/>
</dbReference>
<dbReference type="NCBIfam" id="TIGR00399">
    <property type="entry name" value="metG_C_term"/>
    <property type="match status" value="1"/>
</dbReference>
<dbReference type="NCBIfam" id="NF001100">
    <property type="entry name" value="PRK00133.1"/>
    <property type="match status" value="1"/>
</dbReference>
<dbReference type="PANTHER" id="PTHR45765">
    <property type="entry name" value="METHIONINE--TRNA LIGASE"/>
    <property type="match status" value="1"/>
</dbReference>
<dbReference type="PANTHER" id="PTHR45765:SF1">
    <property type="entry name" value="METHIONINE--TRNA LIGASE, CYTOPLASMIC"/>
    <property type="match status" value="1"/>
</dbReference>
<dbReference type="Pfam" id="PF19303">
    <property type="entry name" value="Anticodon_3"/>
    <property type="match status" value="1"/>
</dbReference>
<dbReference type="Pfam" id="PF09334">
    <property type="entry name" value="tRNA-synt_1g"/>
    <property type="match status" value="1"/>
</dbReference>
<dbReference type="Pfam" id="PF01588">
    <property type="entry name" value="tRNA_bind"/>
    <property type="match status" value="1"/>
</dbReference>
<dbReference type="PRINTS" id="PR01041">
    <property type="entry name" value="TRNASYNTHMET"/>
</dbReference>
<dbReference type="SUPFAM" id="SSF47323">
    <property type="entry name" value="Anticodon-binding domain of a subclass of class I aminoacyl-tRNA synthetases"/>
    <property type="match status" value="1"/>
</dbReference>
<dbReference type="SUPFAM" id="SSF57770">
    <property type="entry name" value="Methionyl-tRNA synthetase (MetRS), Zn-domain"/>
    <property type="match status" value="1"/>
</dbReference>
<dbReference type="SUPFAM" id="SSF50249">
    <property type="entry name" value="Nucleic acid-binding proteins"/>
    <property type="match status" value="1"/>
</dbReference>
<dbReference type="SUPFAM" id="SSF52374">
    <property type="entry name" value="Nucleotidylyl transferase"/>
    <property type="match status" value="1"/>
</dbReference>
<dbReference type="PROSITE" id="PS00178">
    <property type="entry name" value="AA_TRNA_LIGASE_I"/>
    <property type="match status" value="1"/>
</dbReference>
<dbReference type="PROSITE" id="PS50886">
    <property type="entry name" value="TRBD"/>
    <property type="match status" value="1"/>
</dbReference>
<accession>A6TBK7</accession>
<sequence length="677" mass="76153">MTQVAKKILVTCALPYANGSIHLGHMLEHIQADVWVRYQRMRGHEVNFICADDAHGTPIMLKAQQLGITPEQMIGEMSQEHQTDFAGFDISYDNYHSTHSDENRELSELIYTRLKENGFIKNRTISQLYDPEKGMFLPDRFVKGTCPKCKSPDQYGDNCEVCGATYSPTELIDPKSVVSGATPVMRDSEHFFFDLPSFSEMLQAWTRSGALQEQVANKMQEWFESGLQQWDISRDAPYFGFEIPNAPGKYFYVWLDAPIGYMGSFKNLCDKRGDTTSFDEYWKKDSTAELYHFIGKDIVYFHSLFWPAMLEGSNFRKPTNLFVHGYVTVNGAKMSKSRGTFIKASTWLNHFDADSLRYYYTAKLSSRIDDIDLNLEDFVQRVNADIVNKVVNLASRNAGFISKRFDGVLAAELADPALYKTFTDAAESIGEAWDSREFGKAIREIMALADVANRYVDEQAPWVVAKQEGRDADLQAICTMGLNMFRVLMTWLKPVLPQLAARAEAFLNSELSWDAIQQPLLAHKVNPFKALYNRIEMKQVEALVEASKEEVKATAAPVTGPLADDPIQETITFDDFAKVDLRVALIENAEFVEGSDKLLRLTLDLGGEKRNVFSGIRSAYPDPQPLIGRLTVMVANLAPRKMRFGISEGMVMAAGPGGKDIFLLSPDDGAKPGQQVK</sequence>
<evidence type="ECO:0000255" key="1">
    <source>
        <dbReference type="HAMAP-Rule" id="MF_00098"/>
    </source>
</evidence>
<feature type="chain" id="PRO_0000331843" description="Methionine--tRNA ligase">
    <location>
        <begin position="1"/>
        <end position="677"/>
    </location>
</feature>
<feature type="domain" description="tRNA-binding" evidence="1">
    <location>
        <begin position="575"/>
        <end position="677"/>
    </location>
</feature>
<feature type="short sequence motif" description="'HIGH' region">
    <location>
        <begin position="15"/>
        <end position="25"/>
    </location>
</feature>
<feature type="short sequence motif" description="'KMSKS' region">
    <location>
        <begin position="333"/>
        <end position="337"/>
    </location>
</feature>
<feature type="binding site" evidence="1">
    <location>
        <position position="146"/>
    </location>
    <ligand>
        <name>Zn(2+)</name>
        <dbReference type="ChEBI" id="CHEBI:29105"/>
    </ligand>
</feature>
<feature type="binding site" evidence="1">
    <location>
        <position position="149"/>
    </location>
    <ligand>
        <name>Zn(2+)</name>
        <dbReference type="ChEBI" id="CHEBI:29105"/>
    </ligand>
</feature>
<feature type="binding site" evidence="1">
    <location>
        <position position="159"/>
    </location>
    <ligand>
        <name>Zn(2+)</name>
        <dbReference type="ChEBI" id="CHEBI:29105"/>
    </ligand>
</feature>
<feature type="binding site" evidence="1">
    <location>
        <position position="162"/>
    </location>
    <ligand>
        <name>Zn(2+)</name>
        <dbReference type="ChEBI" id="CHEBI:29105"/>
    </ligand>
</feature>
<feature type="binding site" evidence="1">
    <location>
        <position position="336"/>
    </location>
    <ligand>
        <name>ATP</name>
        <dbReference type="ChEBI" id="CHEBI:30616"/>
    </ligand>
</feature>
<keyword id="KW-0030">Aminoacyl-tRNA synthetase</keyword>
<keyword id="KW-0067">ATP-binding</keyword>
<keyword id="KW-0963">Cytoplasm</keyword>
<keyword id="KW-0436">Ligase</keyword>
<keyword id="KW-0479">Metal-binding</keyword>
<keyword id="KW-0547">Nucleotide-binding</keyword>
<keyword id="KW-0648">Protein biosynthesis</keyword>
<keyword id="KW-0694">RNA-binding</keyword>
<keyword id="KW-0820">tRNA-binding</keyword>
<keyword id="KW-0862">Zinc</keyword>
<proteinExistence type="inferred from homology"/>
<protein>
    <recommendedName>
        <fullName evidence="1">Methionine--tRNA ligase</fullName>
        <ecNumber evidence="1">6.1.1.10</ecNumber>
    </recommendedName>
    <alternativeName>
        <fullName evidence="1">Methionyl-tRNA synthetase</fullName>
        <shortName evidence="1">MetRS</shortName>
    </alternativeName>
</protein>
<comment type="function">
    <text evidence="1">Is required not only for elongation of protein synthesis but also for the initiation of all mRNA translation through initiator tRNA(fMet) aminoacylation.</text>
</comment>
<comment type="catalytic activity">
    <reaction evidence="1">
        <text>tRNA(Met) + L-methionine + ATP = L-methionyl-tRNA(Met) + AMP + diphosphate</text>
        <dbReference type="Rhea" id="RHEA:13481"/>
        <dbReference type="Rhea" id="RHEA-COMP:9667"/>
        <dbReference type="Rhea" id="RHEA-COMP:9698"/>
        <dbReference type="ChEBI" id="CHEBI:30616"/>
        <dbReference type="ChEBI" id="CHEBI:33019"/>
        <dbReference type="ChEBI" id="CHEBI:57844"/>
        <dbReference type="ChEBI" id="CHEBI:78442"/>
        <dbReference type="ChEBI" id="CHEBI:78530"/>
        <dbReference type="ChEBI" id="CHEBI:456215"/>
        <dbReference type="EC" id="6.1.1.10"/>
    </reaction>
</comment>
<comment type="cofactor">
    <cofactor evidence="1">
        <name>Zn(2+)</name>
        <dbReference type="ChEBI" id="CHEBI:29105"/>
    </cofactor>
    <text evidence="1">Binds 1 zinc ion per subunit.</text>
</comment>
<comment type="subunit">
    <text evidence="1">Homodimer.</text>
</comment>
<comment type="subcellular location">
    <subcellularLocation>
        <location evidence="1">Cytoplasm</location>
    </subcellularLocation>
</comment>
<comment type="similarity">
    <text evidence="1">Belongs to the class-I aminoacyl-tRNA synthetase family. MetG type 1 subfamily.</text>
</comment>
<reference key="1">
    <citation type="submission" date="2006-09" db="EMBL/GenBank/DDBJ databases">
        <authorList>
            <consortium name="The Klebsiella pneumonia Genome Sequencing Project"/>
            <person name="McClelland M."/>
            <person name="Sanderson E.K."/>
            <person name="Spieth J."/>
            <person name="Clifton W.S."/>
            <person name="Latreille P."/>
            <person name="Sabo A."/>
            <person name="Pepin K."/>
            <person name="Bhonagiri V."/>
            <person name="Porwollik S."/>
            <person name="Ali J."/>
            <person name="Wilson R.K."/>
        </authorList>
    </citation>
    <scope>NUCLEOTIDE SEQUENCE [LARGE SCALE GENOMIC DNA]</scope>
    <source>
        <strain>ATCC 700721 / MGH 78578</strain>
    </source>
</reference>
<organism>
    <name type="scientific">Klebsiella pneumoniae subsp. pneumoniae (strain ATCC 700721 / MGH 78578)</name>
    <dbReference type="NCBI Taxonomy" id="272620"/>
    <lineage>
        <taxon>Bacteria</taxon>
        <taxon>Pseudomonadati</taxon>
        <taxon>Pseudomonadota</taxon>
        <taxon>Gammaproteobacteria</taxon>
        <taxon>Enterobacterales</taxon>
        <taxon>Enterobacteriaceae</taxon>
        <taxon>Klebsiella/Raoultella group</taxon>
        <taxon>Klebsiella</taxon>
        <taxon>Klebsiella pneumoniae complex</taxon>
    </lineage>
</organism>
<gene>
    <name evidence="1" type="primary">metG</name>
    <name type="ordered locus">KPN78578_25170</name>
    <name type="ORF">KPN_02560</name>
</gene>
<name>SYM_KLEP7</name>